<organism>
    <name type="scientific">Idiomarina loihiensis (strain ATCC BAA-735 / DSM 15497 / L2-TR)</name>
    <dbReference type="NCBI Taxonomy" id="283942"/>
    <lineage>
        <taxon>Bacteria</taxon>
        <taxon>Pseudomonadati</taxon>
        <taxon>Pseudomonadota</taxon>
        <taxon>Gammaproteobacteria</taxon>
        <taxon>Alteromonadales</taxon>
        <taxon>Idiomarinaceae</taxon>
        <taxon>Idiomarina</taxon>
    </lineage>
</organism>
<accession>Q5QXW3</accession>
<name>RL30_IDILO</name>
<dbReference type="EMBL" id="AE017340">
    <property type="protein sequence ID" value="AAV82730.1"/>
    <property type="molecule type" value="Genomic_DNA"/>
</dbReference>
<dbReference type="SMR" id="Q5QXW3"/>
<dbReference type="STRING" id="283942.IL1898"/>
<dbReference type="KEGG" id="ilo:IL1898"/>
<dbReference type="eggNOG" id="COG1841">
    <property type="taxonomic scope" value="Bacteria"/>
</dbReference>
<dbReference type="HOGENOM" id="CLU_131047_1_4_6"/>
<dbReference type="OrthoDB" id="9812790at2"/>
<dbReference type="Proteomes" id="UP000001171">
    <property type="component" value="Chromosome"/>
</dbReference>
<dbReference type="GO" id="GO:0022625">
    <property type="term" value="C:cytosolic large ribosomal subunit"/>
    <property type="evidence" value="ECO:0007669"/>
    <property type="project" value="TreeGrafter"/>
</dbReference>
<dbReference type="GO" id="GO:0003735">
    <property type="term" value="F:structural constituent of ribosome"/>
    <property type="evidence" value="ECO:0007669"/>
    <property type="project" value="InterPro"/>
</dbReference>
<dbReference type="GO" id="GO:0006412">
    <property type="term" value="P:translation"/>
    <property type="evidence" value="ECO:0007669"/>
    <property type="project" value="UniProtKB-UniRule"/>
</dbReference>
<dbReference type="CDD" id="cd01658">
    <property type="entry name" value="Ribosomal_L30"/>
    <property type="match status" value="1"/>
</dbReference>
<dbReference type="FunFam" id="3.30.1390.20:FF:000001">
    <property type="entry name" value="50S ribosomal protein L30"/>
    <property type="match status" value="1"/>
</dbReference>
<dbReference type="Gene3D" id="3.30.1390.20">
    <property type="entry name" value="Ribosomal protein L30, ferredoxin-like fold domain"/>
    <property type="match status" value="1"/>
</dbReference>
<dbReference type="HAMAP" id="MF_01371_B">
    <property type="entry name" value="Ribosomal_uL30_B"/>
    <property type="match status" value="1"/>
</dbReference>
<dbReference type="InterPro" id="IPR036919">
    <property type="entry name" value="Ribo_uL30_ferredoxin-like_sf"/>
</dbReference>
<dbReference type="InterPro" id="IPR005996">
    <property type="entry name" value="Ribosomal_uL30_bac-type"/>
</dbReference>
<dbReference type="InterPro" id="IPR018038">
    <property type="entry name" value="Ribosomal_uL30_CS"/>
</dbReference>
<dbReference type="InterPro" id="IPR016082">
    <property type="entry name" value="Ribosomal_uL30_ferredoxin-like"/>
</dbReference>
<dbReference type="NCBIfam" id="TIGR01308">
    <property type="entry name" value="rpmD_bact"/>
    <property type="match status" value="1"/>
</dbReference>
<dbReference type="PANTHER" id="PTHR15892:SF2">
    <property type="entry name" value="LARGE RIBOSOMAL SUBUNIT PROTEIN UL30M"/>
    <property type="match status" value="1"/>
</dbReference>
<dbReference type="PANTHER" id="PTHR15892">
    <property type="entry name" value="MITOCHONDRIAL RIBOSOMAL PROTEIN L30"/>
    <property type="match status" value="1"/>
</dbReference>
<dbReference type="Pfam" id="PF00327">
    <property type="entry name" value="Ribosomal_L30"/>
    <property type="match status" value="1"/>
</dbReference>
<dbReference type="PIRSF" id="PIRSF002211">
    <property type="entry name" value="Ribosomal_L30_bac-type"/>
    <property type="match status" value="1"/>
</dbReference>
<dbReference type="SUPFAM" id="SSF55129">
    <property type="entry name" value="Ribosomal protein L30p/L7e"/>
    <property type="match status" value="1"/>
</dbReference>
<dbReference type="PROSITE" id="PS00634">
    <property type="entry name" value="RIBOSOMAL_L30"/>
    <property type="match status" value="1"/>
</dbReference>
<evidence type="ECO:0000255" key="1">
    <source>
        <dbReference type="HAMAP-Rule" id="MF_01371"/>
    </source>
</evidence>
<evidence type="ECO:0000305" key="2"/>
<gene>
    <name evidence="1" type="primary">rpmD</name>
    <name type="ordered locus">IL1898</name>
</gene>
<reference key="1">
    <citation type="journal article" date="2004" name="Proc. Natl. Acad. Sci. U.S.A.">
        <title>Genome sequence of the deep-sea gamma-proteobacterium Idiomarina loihiensis reveals amino acid fermentation as a source of carbon and energy.</title>
        <authorList>
            <person name="Hou S."/>
            <person name="Saw J.H."/>
            <person name="Lee K.S."/>
            <person name="Freitas T.A."/>
            <person name="Belisle C."/>
            <person name="Kawarabayasi Y."/>
            <person name="Donachie S.P."/>
            <person name="Pikina A."/>
            <person name="Galperin M.Y."/>
            <person name="Koonin E.V."/>
            <person name="Makarova K.S."/>
            <person name="Omelchenko M.V."/>
            <person name="Sorokin A."/>
            <person name="Wolf Y.I."/>
            <person name="Li Q.X."/>
            <person name="Keum Y.S."/>
            <person name="Campbell S."/>
            <person name="Denery J."/>
            <person name="Aizawa S."/>
            <person name="Shibata S."/>
            <person name="Malahoff A."/>
            <person name="Alam M."/>
        </authorList>
    </citation>
    <scope>NUCLEOTIDE SEQUENCE [LARGE SCALE GENOMIC DNA]</scope>
    <source>
        <strain>ATCC BAA-735 / DSM 15497 / L2-TR</strain>
    </source>
</reference>
<comment type="subunit">
    <text evidence="1">Part of the 50S ribosomal subunit.</text>
</comment>
<comment type="similarity">
    <text evidence="1">Belongs to the universal ribosomal protein uL30 family.</text>
</comment>
<protein>
    <recommendedName>
        <fullName evidence="1">Large ribosomal subunit protein uL30</fullName>
    </recommendedName>
    <alternativeName>
        <fullName evidence="2">50S ribosomal protein L30</fullName>
    </alternativeName>
</protein>
<feature type="chain" id="PRO_0000273799" description="Large ribosomal subunit protein uL30">
    <location>
        <begin position="1"/>
        <end position="60"/>
    </location>
</feature>
<sequence>MAKKTIKVTQTRSSIGRLPKHKATLRGLGLRRIGHTVELEDTAAVRGMVNRVNYMIKVEG</sequence>
<keyword id="KW-1185">Reference proteome</keyword>
<keyword id="KW-0687">Ribonucleoprotein</keyword>
<keyword id="KW-0689">Ribosomal protein</keyword>
<proteinExistence type="inferred from homology"/>